<reference key="1">
    <citation type="submission" date="2005-10" db="EMBL/GenBank/DDBJ databases">
        <title>Complete sequence of Pelobacter carbinolicus DSM 2380.</title>
        <authorList>
            <person name="Copeland A."/>
            <person name="Lucas S."/>
            <person name="Lapidus A."/>
            <person name="Barry K."/>
            <person name="Detter J.C."/>
            <person name="Glavina T."/>
            <person name="Hammon N."/>
            <person name="Israni S."/>
            <person name="Pitluck S."/>
            <person name="Chertkov O."/>
            <person name="Schmutz J."/>
            <person name="Larimer F."/>
            <person name="Land M."/>
            <person name="Kyrpides N."/>
            <person name="Ivanova N."/>
            <person name="Richardson P."/>
        </authorList>
    </citation>
    <scope>NUCLEOTIDE SEQUENCE [LARGE SCALE GENOMIC DNA]</scope>
    <source>
        <strain>DSM 2380 / NBRC 103641 / GraBd1</strain>
    </source>
</reference>
<keyword id="KW-1185">Reference proteome</keyword>
<keyword id="KW-0687">Ribonucleoprotein</keyword>
<keyword id="KW-0689">Ribosomal protein</keyword>
<protein>
    <recommendedName>
        <fullName evidence="1">Large ribosomal subunit protein bL19</fullName>
    </recommendedName>
    <alternativeName>
        <fullName evidence="2">50S ribosomal protein L19</fullName>
    </alternativeName>
</protein>
<feature type="chain" id="PRO_0000226860" description="Large ribosomal subunit protein bL19">
    <location>
        <begin position="1"/>
        <end position="115"/>
    </location>
</feature>
<evidence type="ECO:0000255" key="1">
    <source>
        <dbReference type="HAMAP-Rule" id="MF_00402"/>
    </source>
</evidence>
<evidence type="ECO:0000305" key="2"/>
<accession>Q3A2E9</accession>
<name>RL19_SYNC1</name>
<comment type="function">
    <text evidence="1">This protein is located at the 30S-50S ribosomal subunit interface and may play a role in the structure and function of the aminoacyl-tRNA binding site.</text>
</comment>
<comment type="similarity">
    <text evidence="1">Belongs to the bacterial ribosomal protein bL19 family.</text>
</comment>
<sequence>MNIIDRLEMEQMKKDIPAFKAGDTLRVHVKIVEGDKRRIQVFQGVCIKRHNKGLGSTFTVRKISDGMGVERVFPLHSPNIDKIEVMMVGRVRRAKLYYLRKLQGKAARIREKRSL</sequence>
<organism>
    <name type="scientific">Syntrophotalea carbinolica (strain DSM 2380 / NBRC 103641 / GraBd1)</name>
    <name type="common">Pelobacter carbinolicus</name>
    <dbReference type="NCBI Taxonomy" id="338963"/>
    <lineage>
        <taxon>Bacteria</taxon>
        <taxon>Pseudomonadati</taxon>
        <taxon>Thermodesulfobacteriota</taxon>
        <taxon>Desulfuromonadia</taxon>
        <taxon>Desulfuromonadales</taxon>
        <taxon>Syntrophotaleaceae</taxon>
        <taxon>Syntrophotalea</taxon>
    </lineage>
</organism>
<gene>
    <name evidence="1" type="primary">rplS</name>
    <name type="ordered locus">Pcar_2219</name>
</gene>
<dbReference type="EMBL" id="CP000142">
    <property type="protein sequence ID" value="ABA89458.1"/>
    <property type="molecule type" value="Genomic_DNA"/>
</dbReference>
<dbReference type="RefSeq" id="WP_011341973.1">
    <property type="nucleotide sequence ID" value="NC_007498.2"/>
</dbReference>
<dbReference type="SMR" id="Q3A2E9"/>
<dbReference type="STRING" id="338963.Pcar_2219"/>
<dbReference type="KEGG" id="pca:Pcar_2219"/>
<dbReference type="eggNOG" id="COG0335">
    <property type="taxonomic scope" value="Bacteria"/>
</dbReference>
<dbReference type="HOGENOM" id="CLU_103507_2_1_7"/>
<dbReference type="OrthoDB" id="9803541at2"/>
<dbReference type="Proteomes" id="UP000002534">
    <property type="component" value="Chromosome"/>
</dbReference>
<dbReference type="GO" id="GO:0022625">
    <property type="term" value="C:cytosolic large ribosomal subunit"/>
    <property type="evidence" value="ECO:0007669"/>
    <property type="project" value="TreeGrafter"/>
</dbReference>
<dbReference type="GO" id="GO:0003735">
    <property type="term" value="F:structural constituent of ribosome"/>
    <property type="evidence" value="ECO:0007669"/>
    <property type="project" value="InterPro"/>
</dbReference>
<dbReference type="GO" id="GO:0006412">
    <property type="term" value="P:translation"/>
    <property type="evidence" value="ECO:0007669"/>
    <property type="project" value="UniProtKB-UniRule"/>
</dbReference>
<dbReference type="FunFam" id="2.30.30.790:FF:000001">
    <property type="entry name" value="50S ribosomal protein L19"/>
    <property type="match status" value="1"/>
</dbReference>
<dbReference type="Gene3D" id="2.30.30.790">
    <property type="match status" value="1"/>
</dbReference>
<dbReference type="HAMAP" id="MF_00402">
    <property type="entry name" value="Ribosomal_bL19"/>
    <property type="match status" value="1"/>
</dbReference>
<dbReference type="InterPro" id="IPR001857">
    <property type="entry name" value="Ribosomal_bL19"/>
</dbReference>
<dbReference type="InterPro" id="IPR038657">
    <property type="entry name" value="Ribosomal_bL19_sf"/>
</dbReference>
<dbReference type="InterPro" id="IPR008991">
    <property type="entry name" value="Translation_prot_SH3-like_sf"/>
</dbReference>
<dbReference type="NCBIfam" id="TIGR01024">
    <property type="entry name" value="rplS_bact"/>
    <property type="match status" value="1"/>
</dbReference>
<dbReference type="PANTHER" id="PTHR15680:SF9">
    <property type="entry name" value="LARGE RIBOSOMAL SUBUNIT PROTEIN BL19M"/>
    <property type="match status" value="1"/>
</dbReference>
<dbReference type="PANTHER" id="PTHR15680">
    <property type="entry name" value="RIBOSOMAL PROTEIN L19"/>
    <property type="match status" value="1"/>
</dbReference>
<dbReference type="Pfam" id="PF01245">
    <property type="entry name" value="Ribosomal_L19"/>
    <property type="match status" value="1"/>
</dbReference>
<dbReference type="PIRSF" id="PIRSF002191">
    <property type="entry name" value="Ribosomal_L19"/>
    <property type="match status" value="1"/>
</dbReference>
<dbReference type="PRINTS" id="PR00061">
    <property type="entry name" value="RIBOSOMALL19"/>
</dbReference>
<dbReference type="SUPFAM" id="SSF50104">
    <property type="entry name" value="Translation proteins SH3-like domain"/>
    <property type="match status" value="1"/>
</dbReference>
<proteinExistence type="inferred from homology"/>